<proteinExistence type="inferred from homology"/>
<feature type="chain" id="PRO_0000204752" description="Putative phosphatidylethanolamine-binding protein">
    <location>
        <begin position="1"/>
        <end position="190"/>
    </location>
</feature>
<dbReference type="EMBL" id="U18984">
    <property type="protein sequence ID" value="AAC47026.1"/>
    <property type="molecule type" value="Genomic_DNA"/>
</dbReference>
<dbReference type="SMR" id="P54189"/>
<dbReference type="EnsemblProtists" id="CZT99358">
    <property type="protein sequence ID" value="CZT99358"/>
    <property type="gene ID" value="PF3D7_1219700"/>
</dbReference>
<dbReference type="VEuPathDB" id="PlasmoDB:PF3D7_1219700"/>
<dbReference type="VEuPathDB" id="PlasmoDB:Pf7G8-2_000025400"/>
<dbReference type="VEuPathDB" id="PlasmoDB:Pf7G8_120024500"/>
<dbReference type="VEuPathDB" id="PlasmoDB:PfCD01_120024800"/>
<dbReference type="VEuPathDB" id="PlasmoDB:PfDd2_120024300"/>
<dbReference type="VEuPathDB" id="PlasmoDB:PfGA01_120024600"/>
<dbReference type="VEuPathDB" id="PlasmoDB:PfGB4_120024500"/>
<dbReference type="VEuPathDB" id="PlasmoDB:PfGN01_120025800"/>
<dbReference type="VEuPathDB" id="PlasmoDB:PfHB3_120024700"/>
<dbReference type="VEuPathDB" id="PlasmoDB:PfIT_120025000"/>
<dbReference type="VEuPathDB" id="PlasmoDB:PfKE01_120024900"/>
<dbReference type="VEuPathDB" id="PlasmoDB:PfKH01_120026300"/>
<dbReference type="VEuPathDB" id="PlasmoDB:PfKH02_120024900"/>
<dbReference type="VEuPathDB" id="PlasmoDB:PfML01_120025100"/>
<dbReference type="VEuPathDB" id="PlasmoDB:PfNF135_120025000"/>
<dbReference type="VEuPathDB" id="PlasmoDB:PfNF166_120026600"/>
<dbReference type="VEuPathDB" id="PlasmoDB:PfNF54_120024500"/>
<dbReference type="VEuPathDB" id="PlasmoDB:PfSD01_120024800"/>
<dbReference type="VEuPathDB" id="PlasmoDB:PfSN01_120025500"/>
<dbReference type="VEuPathDB" id="PlasmoDB:PfTG01_000063100"/>
<dbReference type="VEuPathDB" id="PlasmoDB:PfTG01_120024800"/>
<dbReference type="OMA" id="VHWVVSG"/>
<dbReference type="GO" id="GO:0008289">
    <property type="term" value="F:lipid binding"/>
    <property type="evidence" value="ECO:0007669"/>
    <property type="project" value="UniProtKB-KW"/>
</dbReference>
<dbReference type="CDD" id="cd00866">
    <property type="entry name" value="PEBP_euk"/>
    <property type="match status" value="1"/>
</dbReference>
<dbReference type="FunFam" id="3.90.280.10:FF:000007">
    <property type="entry name" value="Raf kinase inhibitor"/>
    <property type="match status" value="1"/>
</dbReference>
<dbReference type="Gene3D" id="3.90.280.10">
    <property type="entry name" value="PEBP-like"/>
    <property type="match status" value="1"/>
</dbReference>
<dbReference type="InterPro" id="IPR008914">
    <property type="entry name" value="PEBP"/>
</dbReference>
<dbReference type="InterPro" id="IPR036610">
    <property type="entry name" value="PEBP-like_sf"/>
</dbReference>
<dbReference type="InterPro" id="IPR035810">
    <property type="entry name" value="PEBP_euk"/>
</dbReference>
<dbReference type="InterPro" id="IPR001858">
    <property type="entry name" value="Phosphatidylethanolamine-bd_CS"/>
</dbReference>
<dbReference type="PANTHER" id="PTHR11362">
    <property type="entry name" value="PHOSPHATIDYLETHANOLAMINE-BINDING PROTEIN"/>
    <property type="match status" value="1"/>
</dbReference>
<dbReference type="PANTHER" id="PTHR11362:SF82">
    <property type="entry name" value="PHOSPHATIDYLETHANOLAMINE-BINDING PROTEIN 4"/>
    <property type="match status" value="1"/>
</dbReference>
<dbReference type="Pfam" id="PF01161">
    <property type="entry name" value="PBP"/>
    <property type="match status" value="1"/>
</dbReference>
<dbReference type="SUPFAM" id="SSF49777">
    <property type="entry name" value="PEBP-like"/>
    <property type="match status" value="1"/>
</dbReference>
<dbReference type="PROSITE" id="PS01220">
    <property type="entry name" value="PBP"/>
    <property type="match status" value="1"/>
</dbReference>
<evidence type="ECO:0000305" key="1"/>
<organism>
    <name type="scientific">Plasmodium falciparum</name>
    <dbReference type="NCBI Taxonomy" id="5833"/>
    <lineage>
        <taxon>Eukaryota</taxon>
        <taxon>Sar</taxon>
        <taxon>Alveolata</taxon>
        <taxon>Apicomplexa</taxon>
        <taxon>Aconoidasida</taxon>
        <taxon>Haemosporida</taxon>
        <taxon>Plasmodiidae</taxon>
        <taxon>Plasmodium</taxon>
        <taxon>Plasmodium (Laverania)</taxon>
    </lineage>
</organism>
<keyword id="KW-0446">Lipid-binding</keyword>
<name>PEBP_PLAFA</name>
<sequence>MTIPTISELKKDRIIPHVFPNDKIDLNVDLFISFKAGKEVNHGNVLDIAGTGSVPRNIKFSEEPPDGYCFVLFMVDPDYPSRLRPDGKEYIHWVVSGIKTKELIKGTQKNCVTILPYVGPSIKKGTGLHRISFIISLIKEEDKDNITGLPHYKGEKYITRVKFNNYESVHNIAQINNMKIVGYNWCQIEG</sequence>
<accession>P54189</accession>
<comment type="similarity">
    <text evidence="1">Belongs to the phosphatidylethanolamine-binding protein family.</text>
</comment>
<protein>
    <recommendedName>
        <fullName>Putative phosphatidylethanolamine-binding protein</fullName>
    </recommendedName>
</protein>
<reference key="1">
    <citation type="journal article" date="1995" name="Mol. Biochem. Parasitol.">
        <title>The primary structure of a putative phosphatidylethanolamine-binding protein from Plasmodium falciparum.</title>
        <authorList>
            <person name="Trottein F."/>
            <person name="Cowman A.F."/>
        </authorList>
    </citation>
    <scope>NUCLEOTIDE SEQUENCE [GENOMIC DNA]</scope>
</reference>